<reference key="1">
    <citation type="journal article" date="2009" name="J. Bacteriol.">
        <title>Complete genome sequence and comparative genome analysis of enteropathogenic Escherichia coli O127:H6 strain E2348/69.</title>
        <authorList>
            <person name="Iguchi A."/>
            <person name="Thomson N.R."/>
            <person name="Ogura Y."/>
            <person name="Saunders D."/>
            <person name="Ooka T."/>
            <person name="Henderson I.R."/>
            <person name="Harris D."/>
            <person name="Asadulghani M."/>
            <person name="Kurokawa K."/>
            <person name="Dean P."/>
            <person name="Kenny B."/>
            <person name="Quail M.A."/>
            <person name="Thurston S."/>
            <person name="Dougan G."/>
            <person name="Hayashi T."/>
            <person name="Parkhill J."/>
            <person name="Frankel G."/>
        </authorList>
    </citation>
    <scope>NUCLEOTIDE SEQUENCE [LARGE SCALE GENOMIC DNA]</scope>
    <source>
        <strain>E2348/69 / EPEC</strain>
    </source>
</reference>
<proteinExistence type="inferred from homology"/>
<gene>
    <name evidence="1" type="primary">nadE</name>
    <name type="ordered locus">E2348C_1868</name>
</gene>
<protein>
    <recommendedName>
        <fullName evidence="1">NH(3)-dependent NAD(+) synthetase</fullName>
        <ecNumber evidence="1">6.3.1.5</ecNumber>
    </recommendedName>
</protein>
<keyword id="KW-0067">ATP-binding</keyword>
<keyword id="KW-0436">Ligase</keyword>
<keyword id="KW-0460">Magnesium</keyword>
<keyword id="KW-0479">Metal-binding</keyword>
<keyword id="KW-0520">NAD</keyword>
<keyword id="KW-0547">Nucleotide-binding</keyword>
<keyword id="KW-1185">Reference proteome</keyword>
<comment type="function">
    <text evidence="1">Catalyzes the ATP-dependent amidation of deamido-NAD to form NAD. Uses ammonia as a nitrogen source.</text>
</comment>
<comment type="catalytic activity">
    <reaction evidence="1">
        <text>deamido-NAD(+) + NH4(+) + ATP = AMP + diphosphate + NAD(+) + H(+)</text>
        <dbReference type="Rhea" id="RHEA:21188"/>
        <dbReference type="ChEBI" id="CHEBI:15378"/>
        <dbReference type="ChEBI" id="CHEBI:28938"/>
        <dbReference type="ChEBI" id="CHEBI:30616"/>
        <dbReference type="ChEBI" id="CHEBI:33019"/>
        <dbReference type="ChEBI" id="CHEBI:57540"/>
        <dbReference type="ChEBI" id="CHEBI:58437"/>
        <dbReference type="ChEBI" id="CHEBI:456215"/>
        <dbReference type="EC" id="6.3.1.5"/>
    </reaction>
</comment>
<comment type="pathway">
    <text evidence="1">Cofactor biosynthesis; NAD(+) biosynthesis; NAD(+) from deamido-NAD(+) (ammonia route): step 1/1.</text>
</comment>
<comment type="subunit">
    <text evidence="1">Homodimer.</text>
</comment>
<comment type="similarity">
    <text evidence="1">Belongs to the NAD synthetase family.</text>
</comment>
<name>NADE_ECO27</name>
<accession>B7USC1</accession>
<dbReference type="EC" id="6.3.1.5" evidence="1"/>
<dbReference type="EMBL" id="FM180568">
    <property type="protein sequence ID" value="CAS09416.1"/>
    <property type="molecule type" value="Genomic_DNA"/>
</dbReference>
<dbReference type="RefSeq" id="WP_000175022.1">
    <property type="nucleotide sequence ID" value="NC_011601.1"/>
</dbReference>
<dbReference type="SMR" id="B7USC1"/>
<dbReference type="KEGG" id="ecg:E2348C_1868"/>
<dbReference type="HOGENOM" id="CLU_059327_3_0_6"/>
<dbReference type="UniPathway" id="UPA00253">
    <property type="reaction ID" value="UER00333"/>
</dbReference>
<dbReference type="Proteomes" id="UP000008205">
    <property type="component" value="Chromosome"/>
</dbReference>
<dbReference type="GO" id="GO:0005737">
    <property type="term" value="C:cytoplasm"/>
    <property type="evidence" value="ECO:0007669"/>
    <property type="project" value="InterPro"/>
</dbReference>
<dbReference type="GO" id="GO:0005524">
    <property type="term" value="F:ATP binding"/>
    <property type="evidence" value="ECO:0007669"/>
    <property type="project" value="UniProtKB-UniRule"/>
</dbReference>
<dbReference type="GO" id="GO:0004359">
    <property type="term" value="F:glutaminase activity"/>
    <property type="evidence" value="ECO:0007669"/>
    <property type="project" value="InterPro"/>
</dbReference>
<dbReference type="GO" id="GO:0046872">
    <property type="term" value="F:metal ion binding"/>
    <property type="evidence" value="ECO:0007669"/>
    <property type="project" value="UniProtKB-KW"/>
</dbReference>
<dbReference type="GO" id="GO:0003952">
    <property type="term" value="F:NAD+ synthase (glutamine-hydrolyzing) activity"/>
    <property type="evidence" value="ECO:0007669"/>
    <property type="project" value="InterPro"/>
</dbReference>
<dbReference type="GO" id="GO:0008795">
    <property type="term" value="F:NAD+ synthase activity"/>
    <property type="evidence" value="ECO:0007669"/>
    <property type="project" value="UniProtKB-UniRule"/>
</dbReference>
<dbReference type="GO" id="GO:0009435">
    <property type="term" value="P:NAD biosynthetic process"/>
    <property type="evidence" value="ECO:0007669"/>
    <property type="project" value="UniProtKB-UniRule"/>
</dbReference>
<dbReference type="CDD" id="cd00553">
    <property type="entry name" value="NAD_synthase"/>
    <property type="match status" value="1"/>
</dbReference>
<dbReference type="FunFam" id="3.40.50.620:FF:000015">
    <property type="entry name" value="NH(3)-dependent NAD(+) synthetase"/>
    <property type="match status" value="1"/>
</dbReference>
<dbReference type="Gene3D" id="3.40.50.620">
    <property type="entry name" value="HUPs"/>
    <property type="match status" value="1"/>
</dbReference>
<dbReference type="HAMAP" id="MF_00193">
    <property type="entry name" value="NadE_ammonia_dep"/>
    <property type="match status" value="1"/>
</dbReference>
<dbReference type="InterPro" id="IPR022310">
    <property type="entry name" value="NAD/GMP_synthase"/>
</dbReference>
<dbReference type="InterPro" id="IPR003694">
    <property type="entry name" value="NAD_synthase"/>
</dbReference>
<dbReference type="InterPro" id="IPR022926">
    <property type="entry name" value="NH(3)-dep_NAD(+)_synth"/>
</dbReference>
<dbReference type="InterPro" id="IPR014729">
    <property type="entry name" value="Rossmann-like_a/b/a_fold"/>
</dbReference>
<dbReference type="NCBIfam" id="TIGR00552">
    <property type="entry name" value="nadE"/>
    <property type="match status" value="1"/>
</dbReference>
<dbReference type="NCBIfam" id="NF001979">
    <property type="entry name" value="PRK00768.1"/>
    <property type="match status" value="1"/>
</dbReference>
<dbReference type="PANTHER" id="PTHR23090">
    <property type="entry name" value="NH 3 /GLUTAMINE-DEPENDENT NAD + SYNTHETASE"/>
    <property type="match status" value="1"/>
</dbReference>
<dbReference type="PANTHER" id="PTHR23090:SF7">
    <property type="entry name" value="NH(3)-DEPENDENT NAD(+) SYNTHETASE"/>
    <property type="match status" value="1"/>
</dbReference>
<dbReference type="Pfam" id="PF02540">
    <property type="entry name" value="NAD_synthase"/>
    <property type="match status" value="1"/>
</dbReference>
<dbReference type="SUPFAM" id="SSF52402">
    <property type="entry name" value="Adenine nucleotide alpha hydrolases-like"/>
    <property type="match status" value="1"/>
</dbReference>
<evidence type="ECO:0000255" key="1">
    <source>
        <dbReference type="HAMAP-Rule" id="MF_00193"/>
    </source>
</evidence>
<sequence length="275" mass="30652">MTLQQQIIKALGAKPQINAEEEIRRSIDFLKSYLQTYPFIKSLVLGISGGQDSTLAGKLCQMAINELRQKTGNESLQFIAVRLPYGVQADEQDCQDAIAFIQPDRVLTVNIKGAVLASEQALREAGIELSDFVRGNEKARERMKAQYSIAGMTSGVVVGTDHAAEAITGFFTKYGDGGTDINPLYRLNKRQGKQLLAALGCPEHLYKKAPTADLEDDRPSLPDEVALGVTYDNIDDYLEGKNVPEQVARTIENWYLKTEHKRRPPITVFDDFWKK</sequence>
<organism>
    <name type="scientific">Escherichia coli O127:H6 (strain E2348/69 / EPEC)</name>
    <dbReference type="NCBI Taxonomy" id="574521"/>
    <lineage>
        <taxon>Bacteria</taxon>
        <taxon>Pseudomonadati</taxon>
        <taxon>Pseudomonadota</taxon>
        <taxon>Gammaproteobacteria</taxon>
        <taxon>Enterobacterales</taxon>
        <taxon>Enterobacteriaceae</taxon>
        <taxon>Escherichia</taxon>
    </lineage>
</organism>
<feature type="chain" id="PRO_1000191501" description="NH(3)-dependent NAD(+) synthetase">
    <location>
        <begin position="1"/>
        <end position="275"/>
    </location>
</feature>
<feature type="binding site" evidence="1">
    <location>
        <begin position="46"/>
        <end position="53"/>
    </location>
    <ligand>
        <name>ATP</name>
        <dbReference type="ChEBI" id="CHEBI:30616"/>
    </ligand>
</feature>
<feature type="binding site" evidence="1">
    <location>
        <position position="52"/>
    </location>
    <ligand>
        <name>Mg(2+)</name>
        <dbReference type="ChEBI" id="CHEBI:18420"/>
    </ligand>
</feature>
<feature type="binding site" evidence="1">
    <location>
        <position position="140"/>
    </location>
    <ligand>
        <name>deamido-NAD(+)</name>
        <dbReference type="ChEBI" id="CHEBI:58437"/>
    </ligand>
</feature>
<feature type="binding site" evidence="1">
    <location>
        <position position="160"/>
    </location>
    <ligand>
        <name>ATP</name>
        <dbReference type="ChEBI" id="CHEBI:30616"/>
    </ligand>
</feature>
<feature type="binding site" evidence="1">
    <location>
        <position position="165"/>
    </location>
    <ligand>
        <name>Mg(2+)</name>
        <dbReference type="ChEBI" id="CHEBI:18420"/>
    </ligand>
</feature>
<feature type="binding site" evidence="1">
    <location>
        <position position="173"/>
    </location>
    <ligand>
        <name>deamido-NAD(+)</name>
        <dbReference type="ChEBI" id="CHEBI:58437"/>
    </ligand>
</feature>
<feature type="binding site" evidence="1">
    <location>
        <position position="180"/>
    </location>
    <ligand>
        <name>deamido-NAD(+)</name>
        <dbReference type="ChEBI" id="CHEBI:58437"/>
    </ligand>
</feature>
<feature type="binding site" evidence="1">
    <location>
        <position position="189"/>
    </location>
    <ligand>
        <name>ATP</name>
        <dbReference type="ChEBI" id="CHEBI:30616"/>
    </ligand>
</feature>
<feature type="binding site" evidence="1">
    <location>
        <position position="211"/>
    </location>
    <ligand>
        <name>ATP</name>
        <dbReference type="ChEBI" id="CHEBI:30616"/>
    </ligand>
</feature>
<feature type="binding site" evidence="1">
    <location>
        <begin position="260"/>
        <end position="261"/>
    </location>
    <ligand>
        <name>deamido-NAD(+)</name>
        <dbReference type="ChEBI" id="CHEBI:58437"/>
    </ligand>
</feature>